<accession>Q7VQG3</accession>
<name>SYA_BLOFL</name>
<sequence>MYKSIDVVRQEFLDFFHKQEHQVVPSSSLVPKNDQTLLFTNSGMNQFKDIFLGLVKPSYKRVVTAQRCMRAGGKHNDLNNVGYTECHLTFFEMLGNFSFGDYFKDDAIQFAWELLTDSNWFGLSKDKIWVTTHIEDDESYNIWVKQVGISTKRIVKIGNKNSDLYDSDNFWQMGNIGPCGPCSEIFYDFGSDLKGKPPGYMQGLGSRYIEIWNLVFMQFNRQLNDRLIDLPMLSVDTGMGLERITAILQGVHSNYLIDVFKNLIVDISNIMKVKEYINNRSLYVIADHIRACVFLIKDGVVPSNEGQGYVLRRIIRRSVRHGRKLGVNDIFLYKLVNLVIVHMNYVSNILYDQKDLIEQILFNEEKLFNNTLKKGLELLEKSLKNLNQDKILSGEIAFQLYTTYGFPLELTKDICCERNIKVDQLEFDQIMLTERRNSKRLSQFHKNFNNIILSSYAKTSTFVGYKCFSCQSKIIALLQDNELINKMCDVDQESMVILDITPFYGESGGQIGDSGYLKGECGVFKVKNTKKYGQIIVHIGVLISGIFLIGEQVFAQVNRLKRKDISVNHSSTHLLHSALLKILGSHVTQQGSLINDKYFRFDFSHYNAITITQINEVENLINQQIWDNLLVTENIMLMESARNIGAIMLLHKQYTEKVRVIQIGDCSIELCGGTHVSNTNEIGLFIITKEFGIGSGVRRIEAVTKNAALSVIQNKKKLIQNIAQIAQSDDVNLLNVIHEFKARYEKLDREIKLLNSKQEIQKVLSLVREVYYIKNVRVLVNHVKNMESSSLFKMVKLLKHYLQSGIVVLINIRKNNIAHIVISITKDLVECNRIYAIDLIQYIIRSVKNGKGGGRFDFAQLNINNVKNVSELVIQIQSLLNDIICNIKSIK</sequence>
<gene>
    <name evidence="1" type="primary">alaS</name>
    <name type="ordered locus">Bfl168</name>
</gene>
<keyword id="KW-0030">Aminoacyl-tRNA synthetase</keyword>
<keyword id="KW-0067">ATP-binding</keyword>
<keyword id="KW-0963">Cytoplasm</keyword>
<keyword id="KW-0436">Ligase</keyword>
<keyword id="KW-0479">Metal-binding</keyword>
<keyword id="KW-0547">Nucleotide-binding</keyword>
<keyword id="KW-0648">Protein biosynthesis</keyword>
<keyword id="KW-1185">Reference proteome</keyword>
<keyword id="KW-0694">RNA-binding</keyword>
<keyword id="KW-0820">tRNA-binding</keyword>
<keyword id="KW-0862">Zinc</keyword>
<evidence type="ECO:0000255" key="1">
    <source>
        <dbReference type="HAMAP-Rule" id="MF_00036"/>
    </source>
</evidence>
<comment type="function">
    <text evidence="1">Catalyzes the attachment of alanine to tRNA(Ala) in a two-step reaction: alanine is first activated by ATP to form Ala-AMP and then transferred to the acceptor end of tRNA(Ala). Also edits incorrectly charged Ser-tRNA(Ala) and Gly-tRNA(Ala) via its editing domain.</text>
</comment>
<comment type="catalytic activity">
    <reaction evidence="1">
        <text>tRNA(Ala) + L-alanine + ATP = L-alanyl-tRNA(Ala) + AMP + diphosphate</text>
        <dbReference type="Rhea" id="RHEA:12540"/>
        <dbReference type="Rhea" id="RHEA-COMP:9657"/>
        <dbReference type="Rhea" id="RHEA-COMP:9923"/>
        <dbReference type="ChEBI" id="CHEBI:30616"/>
        <dbReference type="ChEBI" id="CHEBI:33019"/>
        <dbReference type="ChEBI" id="CHEBI:57972"/>
        <dbReference type="ChEBI" id="CHEBI:78442"/>
        <dbReference type="ChEBI" id="CHEBI:78497"/>
        <dbReference type="ChEBI" id="CHEBI:456215"/>
        <dbReference type="EC" id="6.1.1.7"/>
    </reaction>
</comment>
<comment type="cofactor">
    <cofactor evidence="1">
        <name>Zn(2+)</name>
        <dbReference type="ChEBI" id="CHEBI:29105"/>
    </cofactor>
    <text evidence="1">Binds 1 zinc ion per subunit.</text>
</comment>
<comment type="subunit">
    <text evidence="1">Homotetramer.</text>
</comment>
<comment type="subcellular location">
    <subcellularLocation>
        <location evidence="1">Cytoplasm</location>
    </subcellularLocation>
</comment>
<comment type="domain">
    <text evidence="1">Consists of three domains; the N-terminal catalytic domain, the editing domain and the C-terminal C-Ala domain. The editing domain removes incorrectly charged amino acids, while the C-Ala domain, along with tRNA(Ala), serves as a bridge to cooperatively bring together the editing and aminoacylation centers thus stimulating deacylation of misacylated tRNAs.</text>
</comment>
<comment type="similarity">
    <text evidence="1">Belongs to the class-II aminoacyl-tRNA synthetase family.</text>
</comment>
<feature type="chain" id="PRO_0000075067" description="Alanine--tRNA ligase">
    <location>
        <begin position="1"/>
        <end position="891"/>
    </location>
</feature>
<feature type="binding site" evidence="1">
    <location>
        <position position="569"/>
    </location>
    <ligand>
        <name>Zn(2+)</name>
        <dbReference type="ChEBI" id="CHEBI:29105"/>
    </ligand>
</feature>
<feature type="binding site" evidence="1">
    <location>
        <position position="573"/>
    </location>
    <ligand>
        <name>Zn(2+)</name>
        <dbReference type="ChEBI" id="CHEBI:29105"/>
    </ligand>
</feature>
<feature type="binding site" evidence="1">
    <location>
        <position position="671"/>
    </location>
    <ligand>
        <name>Zn(2+)</name>
        <dbReference type="ChEBI" id="CHEBI:29105"/>
    </ligand>
</feature>
<feature type="binding site" evidence="1">
    <location>
        <position position="675"/>
    </location>
    <ligand>
        <name>Zn(2+)</name>
        <dbReference type="ChEBI" id="CHEBI:29105"/>
    </ligand>
</feature>
<organism>
    <name type="scientific">Blochmanniella floridana</name>
    <dbReference type="NCBI Taxonomy" id="203907"/>
    <lineage>
        <taxon>Bacteria</taxon>
        <taxon>Pseudomonadati</taxon>
        <taxon>Pseudomonadota</taxon>
        <taxon>Gammaproteobacteria</taxon>
        <taxon>Enterobacterales</taxon>
        <taxon>Enterobacteriaceae</taxon>
        <taxon>ant endosymbionts</taxon>
        <taxon>Candidatus Blochmanniella</taxon>
    </lineage>
</organism>
<protein>
    <recommendedName>
        <fullName evidence="1">Alanine--tRNA ligase</fullName>
        <ecNumber evidence="1">6.1.1.7</ecNumber>
    </recommendedName>
    <alternativeName>
        <fullName evidence="1">Alanyl-tRNA synthetase</fullName>
        <shortName evidence="1">AlaRS</shortName>
    </alternativeName>
</protein>
<dbReference type="EC" id="6.1.1.7" evidence="1"/>
<dbReference type="EMBL" id="BX248583">
    <property type="protein sequence ID" value="CAD83689.1"/>
    <property type="molecule type" value="Genomic_DNA"/>
</dbReference>
<dbReference type="SMR" id="Q7VQG3"/>
<dbReference type="STRING" id="203907.Bfl168"/>
<dbReference type="KEGG" id="bfl:Bfl168"/>
<dbReference type="eggNOG" id="COG0013">
    <property type="taxonomic scope" value="Bacteria"/>
</dbReference>
<dbReference type="HOGENOM" id="CLU_004485_1_1_6"/>
<dbReference type="OrthoDB" id="9803884at2"/>
<dbReference type="Proteomes" id="UP000002192">
    <property type="component" value="Chromosome"/>
</dbReference>
<dbReference type="GO" id="GO:0005829">
    <property type="term" value="C:cytosol"/>
    <property type="evidence" value="ECO:0007669"/>
    <property type="project" value="TreeGrafter"/>
</dbReference>
<dbReference type="GO" id="GO:0004813">
    <property type="term" value="F:alanine-tRNA ligase activity"/>
    <property type="evidence" value="ECO:0007669"/>
    <property type="project" value="UniProtKB-UniRule"/>
</dbReference>
<dbReference type="GO" id="GO:0002161">
    <property type="term" value="F:aminoacyl-tRNA deacylase activity"/>
    <property type="evidence" value="ECO:0007669"/>
    <property type="project" value="TreeGrafter"/>
</dbReference>
<dbReference type="GO" id="GO:0005524">
    <property type="term" value="F:ATP binding"/>
    <property type="evidence" value="ECO:0007669"/>
    <property type="project" value="UniProtKB-UniRule"/>
</dbReference>
<dbReference type="GO" id="GO:0000049">
    <property type="term" value="F:tRNA binding"/>
    <property type="evidence" value="ECO:0007669"/>
    <property type="project" value="UniProtKB-KW"/>
</dbReference>
<dbReference type="GO" id="GO:0008270">
    <property type="term" value="F:zinc ion binding"/>
    <property type="evidence" value="ECO:0007669"/>
    <property type="project" value="UniProtKB-UniRule"/>
</dbReference>
<dbReference type="GO" id="GO:0006419">
    <property type="term" value="P:alanyl-tRNA aminoacylation"/>
    <property type="evidence" value="ECO:0007669"/>
    <property type="project" value="UniProtKB-UniRule"/>
</dbReference>
<dbReference type="GO" id="GO:0045892">
    <property type="term" value="P:negative regulation of DNA-templated transcription"/>
    <property type="evidence" value="ECO:0007669"/>
    <property type="project" value="TreeGrafter"/>
</dbReference>
<dbReference type="CDD" id="cd00673">
    <property type="entry name" value="AlaRS_core"/>
    <property type="match status" value="1"/>
</dbReference>
<dbReference type="FunFam" id="2.40.30.130:FF:000001">
    <property type="entry name" value="Alanine--tRNA ligase"/>
    <property type="match status" value="1"/>
</dbReference>
<dbReference type="FunFam" id="3.10.310.40:FF:000001">
    <property type="entry name" value="Alanine--tRNA ligase"/>
    <property type="match status" value="1"/>
</dbReference>
<dbReference type="FunFam" id="3.30.930.10:FF:000004">
    <property type="entry name" value="Alanine--tRNA ligase"/>
    <property type="match status" value="1"/>
</dbReference>
<dbReference type="FunFam" id="3.30.980.10:FF:000004">
    <property type="entry name" value="Alanine--tRNA ligase, cytoplasmic"/>
    <property type="match status" value="1"/>
</dbReference>
<dbReference type="Gene3D" id="2.40.30.130">
    <property type="match status" value="1"/>
</dbReference>
<dbReference type="Gene3D" id="3.10.310.40">
    <property type="match status" value="1"/>
</dbReference>
<dbReference type="Gene3D" id="3.30.54.20">
    <property type="match status" value="1"/>
</dbReference>
<dbReference type="Gene3D" id="3.30.930.10">
    <property type="entry name" value="Bira Bifunctional Protein, Domain 2"/>
    <property type="match status" value="1"/>
</dbReference>
<dbReference type="Gene3D" id="3.30.980.10">
    <property type="entry name" value="Threonyl-trna Synthetase, Chain A, domain 2"/>
    <property type="match status" value="1"/>
</dbReference>
<dbReference type="HAMAP" id="MF_00036_B">
    <property type="entry name" value="Ala_tRNA_synth_B"/>
    <property type="match status" value="1"/>
</dbReference>
<dbReference type="InterPro" id="IPR045864">
    <property type="entry name" value="aa-tRNA-synth_II/BPL/LPL"/>
</dbReference>
<dbReference type="InterPro" id="IPR002318">
    <property type="entry name" value="Ala-tRNA-lgiase_IIc"/>
</dbReference>
<dbReference type="InterPro" id="IPR018162">
    <property type="entry name" value="Ala-tRNA-ligase_IIc_anticod-bd"/>
</dbReference>
<dbReference type="InterPro" id="IPR018165">
    <property type="entry name" value="Ala-tRNA-synth_IIc_core"/>
</dbReference>
<dbReference type="InterPro" id="IPR018164">
    <property type="entry name" value="Ala-tRNA-synth_IIc_N"/>
</dbReference>
<dbReference type="InterPro" id="IPR050058">
    <property type="entry name" value="Ala-tRNA_ligase"/>
</dbReference>
<dbReference type="InterPro" id="IPR023033">
    <property type="entry name" value="Ala_tRNA_ligase_euk/bac"/>
</dbReference>
<dbReference type="InterPro" id="IPR003156">
    <property type="entry name" value="DHHA1_dom"/>
</dbReference>
<dbReference type="InterPro" id="IPR018163">
    <property type="entry name" value="Thr/Ala-tRNA-synth_IIc_edit"/>
</dbReference>
<dbReference type="InterPro" id="IPR009000">
    <property type="entry name" value="Transl_B-barrel_sf"/>
</dbReference>
<dbReference type="InterPro" id="IPR012947">
    <property type="entry name" value="tRNA_SAD"/>
</dbReference>
<dbReference type="NCBIfam" id="TIGR00344">
    <property type="entry name" value="alaS"/>
    <property type="match status" value="1"/>
</dbReference>
<dbReference type="PANTHER" id="PTHR11777:SF9">
    <property type="entry name" value="ALANINE--TRNA LIGASE, CYTOPLASMIC"/>
    <property type="match status" value="1"/>
</dbReference>
<dbReference type="PANTHER" id="PTHR11777">
    <property type="entry name" value="ALANYL-TRNA SYNTHETASE"/>
    <property type="match status" value="1"/>
</dbReference>
<dbReference type="Pfam" id="PF02272">
    <property type="entry name" value="DHHA1"/>
    <property type="match status" value="1"/>
</dbReference>
<dbReference type="Pfam" id="PF01411">
    <property type="entry name" value="tRNA-synt_2c"/>
    <property type="match status" value="1"/>
</dbReference>
<dbReference type="Pfam" id="PF07973">
    <property type="entry name" value="tRNA_SAD"/>
    <property type="match status" value="1"/>
</dbReference>
<dbReference type="PRINTS" id="PR00980">
    <property type="entry name" value="TRNASYNTHALA"/>
</dbReference>
<dbReference type="SMART" id="SM00863">
    <property type="entry name" value="tRNA_SAD"/>
    <property type="match status" value="1"/>
</dbReference>
<dbReference type="SUPFAM" id="SSF55681">
    <property type="entry name" value="Class II aaRS and biotin synthetases"/>
    <property type="match status" value="1"/>
</dbReference>
<dbReference type="SUPFAM" id="SSF101353">
    <property type="entry name" value="Putative anticodon-binding domain of alanyl-tRNA synthetase (AlaRS)"/>
    <property type="match status" value="1"/>
</dbReference>
<dbReference type="SUPFAM" id="SSF55186">
    <property type="entry name" value="ThrRS/AlaRS common domain"/>
    <property type="match status" value="1"/>
</dbReference>
<dbReference type="SUPFAM" id="SSF50447">
    <property type="entry name" value="Translation proteins"/>
    <property type="match status" value="1"/>
</dbReference>
<dbReference type="PROSITE" id="PS50860">
    <property type="entry name" value="AA_TRNA_LIGASE_II_ALA"/>
    <property type="match status" value="1"/>
</dbReference>
<reference key="1">
    <citation type="journal article" date="2003" name="Proc. Natl. Acad. Sci. U.S.A.">
        <title>The genome sequence of Blochmannia floridanus: comparative analysis of reduced genomes.</title>
        <authorList>
            <person name="Gil R."/>
            <person name="Silva F.J."/>
            <person name="Zientz E."/>
            <person name="Delmotte F."/>
            <person name="Gonzalez-Candelas F."/>
            <person name="Latorre A."/>
            <person name="Rausell C."/>
            <person name="Kamerbeek J."/>
            <person name="Gadau J."/>
            <person name="Hoelldobler B."/>
            <person name="van Ham R.C.H.J."/>
            <person name="Gross R."/>
            <person name="Moya A."/>
        </authorList>
    </citation>
    <scope>NUCLEOTIDE SEQUENCE [LARGE SCALE GENOMIC DNA]</scope>
</reference>
<proteinExistence type="inferred from homology"/>